<name>F16PA_PSEP1</name>
<sequence>MSRVTLSRYLIEQTRSNNTPADLRFLIEVVARACKEISHHVSKGALGGVLGSMGTENVQGEVQKKLDVISNDILLEANEWGGHLAGMASEEMDNAYQIPGKYPKGAYLLVFDPLDGSSNIDVNVSVGTIFSVLRCPNQYLSQNESLNEEAFLQPGTEQVAAGYAIYGPQTMLILTLGNGVKGFTLDRELGSFVLTHENIRVPETTAEFAINMSNQRHWEAPVQRYVGELLAGETGPLKKNYNMRWIASMVADVHRILTRGGLFMYPRDAREPSKPGKLRLMYEANPMSFIIEQAGGASTNGYDRILDIKPESLHQRVSVILGSKEEVERVTAYHKE</sequence>
<evidence type="ECO:0000255" key="1">
    <source>
        <dbReference type="HAMAP-Rule" id="MF_01855"/>
    </source>
</evidence>
<keyword id="KW-0119">Carbohydrate metabolism</keyword>
<keyword id="KW-0963">Cytoplasm</keyword>
<keyword id="KW-0378">Hydrolase</keyword>
<keyword id="KW-0460">Magnesium</keyword>
<keyword id="KW-0479">Metal-binding</keyword>
<feature type="chain" id="PRO_0000364648" description="Fructose-1,6-bisphosphatase class 1">
    <location>
        <begin position="1"/>
        <end position="336"/>
    </location>
</feature>
<feature type="binding site" evidence="1">
    <location>
        <position position="90"/>
    </location>
    <ligand>
        <name>Mg(2+)</name>
        <dbReference type="ChEBI" id="CHEBI:18420"/>
        <label>1</label>
    </ligand>
</feature>
<feature type="binding site" evidence="1">
    <location>
        <position position="112"/>
    </location>
    <ligand>
        <name>Mg(2+)</name>
        <dbReference type="ChEBI" id="CHEBI:18420"/>
        <label>1</label>
    </ligand>
</feature>
<feature type="binding site" evidence="1">
    <location>
        <position position="112"/>
    </location>
    <ligand>
        <name>Mg(2+)</name>
        <dbReference type="ChEBI" id="CHEBI:18420"/>
        <label>2</label>
    </ligand>
</feature>
<feature type="binding site" evidence="1">
    <location>
        <position position="114"/>
    </location>
    <ligand>
        <name>Mg(2+)</name>
        <dbReference type="ChEBI" id="CHEBI:18420"/>
        <label>1</label>
    </ligand>
</feature>
<feature type="binding site" evidence="1">
    <location>
        <begin position="115"/>
        <end position="118"/>
    </location>
    <ligand>
        <name>substrate</name>
    </ligand>
</feature>
<feature type="binding site" evidence="1">
    <location>
        <position position="115"/>
    </location>
    <ligand>
        <name>Mg(2+)</name>
        <dbReference type="ChEBI" id="CHEBI:18420"/>
        <label>2</label>
    </ligand>
</feature>
<feature type="binding site" evidence="1">
    <location>
        <position position="211"/>
    </location>
    <ligand>
        <name>substrate</name>
    </ligand>
</feature>
<feature type="binding site" evidence="1">
    <location>
        <position position="277"/>
    </location>
    <ligand>
        <name>substrate</name>
    </ligand>
</feature>
<feature type="binding site" evidence="1">
    <location>
        <position position="283"/>
    </location>
    <ligand>
        <name>Mg(2+)</name>
        <dbReference type="ChEBI" id="CHEBI:18420"/>
        <label>2</label>
    </ligand>
</feature>
<dbReference type="EC" id="3.1.3.11" evidence="1"/>
<dbReference type="EMBL" id="CP000712">
    <property type="protein sequence ID" value="ABQ81034.1"/>
    <property type="molecule type" value="Genomic_DNA"/>
</dbReference>
<dbReference type="SMR" id="A5WA74"/>
<dbReference type="KEGG" id="ppf:Pput_4914"/>
<dbReference type="eggNOG" id="COG0158">
    <property type="taxonomic scope" value="Bacteria"/>
</dbReference>
<dbReference type="HOGENOM" id="CLU_039977_0_0_6"/>
<dbReference type="UniPathway" id="UPA00138"/>
<dbReference type="GO" id="GO:0005829">
    <property type="term" value="C:cytosol"/>
    <property type="evidence" value="ECO:0007669"/>
    <property type="project" value="TreeGrafter"/>
</dbReference>
<dbReference type="GO" id="GO:0042132">
    <property type="term" value="F:fructose 1,6-bisphosphate 1-phosphatase activity"/>
    <property type="evidence" value="ECO:0007669"/>
    <property type="project" value="UniProtKB-UniRule"/>
</dbReference>
<dbReference type="GO" id="GO:0000287">
    <property type="term" value="F:magnesium ion binding"/>
    <property type="evidence" value="ECO:0007669"/>
    <property type="project" value="UniProtKB-UniRule"/>
</dbReference>
<dbReference type="GO" id="GO:0030388">
    <property type="term" value="P:fructose 1,6-bisphosphate metabolic process"/>
    <property type="evidence" value="ECO:0007669"/>
    <property type="project" value="TreeGrafter"/>
</dbReference>
<dbReference type="GO" id="GO:0006002">
    <property type="term" value="P:fructose 6-phosphate metabolic process"/>
    <property type="evidence" value="ECO:0007669"/>
    <property type="project" value="TreeGrafter"/>
</dbReference>
<dbReference type="GO" id="GO:0006000">
    <property type="term" value="P:fructose metabolic process"/>
    <property type="evidence" value="ECO:0007669"/>
    <property type="project" value="TreeGrafter"/>
</dbReference>
<dbReference type="GO" id="GO:0006094">
    <property type="term" value="P:gluconeogenesis"/>
    <property type="evidence" value="ECO:0007669"/>
    <property type="project" value="UniProtKB-UniRule"/>
</dbReference>
<dbReference type="GO" id="GO:0005986">
    <property type="term" value="P:sucrose biosynthetic process"/>
    <property type="evidence" value="ECO:0007669"/>
    <property type="project" value="TreeGrafter"/>
</dbReference>
<dbReference type="CDD" id="cd00354">
    <property type="entry name" value="FBPase"/>
    <property type="match status" value="1"/>
</dbReference>
<dbReference type="FunFam" id="3.30.540.10:FF:000006">
    <property type="entry name" value="Fructose-1,6-bisphosphatase class 1"/>
    <property type="match status" value="1"/>
</dbReference>
<dbReference type="FunFam" id="3.40.190.80:FF:000011">
    <property type="entry name" value="Fructose-1,6-bisphosphatase class 1"/>
    <property type="match status" value="1"/>
</dbReference>
<dbReference type="Gene3D" id="3.40.190.80">
    <property type="match status" value="1"/>
</dbReference>
<dbReference type="Gene3D" id="3.30.540.10">
    <property type="entry name" value="Fructose-1,6-Bisphosphatase, subunit A, domain 1"/>
    <property type="match status" value="1"/>
</dbReference>
<dbReference type="HAMAP" id="MF_01855">
    <property type="entry name" value="FBPase_class1"/>
    <property type="match status" value="1"/>
</dbReference>
<dbReference type="InterPro" id="IPR044015">
    <property type="entry name" value="FBPase_C_dom"/>
</dbReference>
<dbReference type="InterPro" id="IPR000146">
    <property type="entry name" value="FBPase_class-1"/>
</dbReference>
<dbReference type="InterPro" id="IPR033391">
    <property type="entry name" value="FBPase_N"/>
</dbReference>
<dbReference type="InterPro" id="IPR028343">
    <property type="entry name" value="FBPtase"/>
</dbReference>
<dbReference type="NCBIfam" id="NF006778">
    <property type="entry name" value="PRK09293.1-1"/>
    <property type="match status" value="1"/>
</dbReference>
<dbReference type="NCBIfam" id="NF006779">
    <property type="entry name" value="PRK09293.1-3"/>
    <property type="match status" value="1"/>
</dbReference>
<dbReference type="NCBIfam" id="NF006780">
    <property type="entry name" value="PRK09293.1-4"/>
    <property type="match status" value="1"/>
</dbReference>
<dbReference type="PANTHER" id="PTHR11556">
    <property type="entry name" value="FRUCTOSE-1,6-BISPHOSPHATASE-RELATED"/>
    <property type="match status" value="1"/>
</dbReference>
<dbReference type="PANTHER" id="PTHR11556:SF35">
    <property type="entry name" value="SEDOHEPTULOSE-1,7-BISPHOSPHATASE, CHLOROPLASTIC"/>
    <property type="match status" value="1"/>
</dbReference>
<dbReference type="Pfam" id="PF00316">
    <property type="entry name" value="FBPase"/>
    <property type="match status" value="1"/>
</dbReference>
<dbReference type="Pfam" id="PF18913">
    <property type="entry name" value="FBPase_C"/>
    <property type="match status" value="1"/>
</dbReference>
<dbReference type="PIRSF" id="PIRSF500210">
    <property type="entry name" value="FBPtase"/>
    <property type="match status" value="1"/>
</dbReference>
<dbReference type="PIRSF" id="PIRSF000904">
    <property type="entry name" value="FBPtase_SBPase"/>
    <property type="match status" value="1"/>
</dbReference>
<dbReference type="PRINTS" id="PR00115">
    <property type="entry name" value="F16BPHPHTASE"/>
</dbReference>
<dbReference type="SUPFAM" id="SSF56655">
    <property type="entry name" value="Carbohydrate phosphatase"/>
    <property type="match status" value="1"/>
</dbReference>
<gene>
    <name evidence="1" type="primary">fbp</name>
    <name type="ordered locus">Pput_4914</name>
</gene>
<proteinExistence type="inferred from homology"/>
<protein>
    <recommendedName>
        <fullName evidence="1">Fructose-1,6-bisphosphatase class 1</fullName>
        <shortName evidence="1">FBPase class 1</shortName>
        <ecNumber evidence="1">3.1.3.11</ecNumber>
    </recommendedName>
    <alternativeName>
        <fullName evidence="1">D-fructose-1,6-bisphosphate 1-phosphohydrolase class 1</fullName>
    </alternativeName>
</protein>
<comment type="catalytic activity">
    <reaction evidence="1">
        <text>beta-D-fructose 1,6-bisphosphate + H2O = beta-D-fructose 6-phosphate + phosphate</text>
        <dbReference type="Rhea" id="RHEA:11064"/>
        <dbReference type="ChEBI" id="CHEBI:15377"/>
        <dbReference type="ChEBI" id="CHEBI:32966"/>
        <dbReference type="ChEBI" id="CHEBI:43474"/>
        <dbReference type="ChEBI" id="CHEBI:57634"/>
        <dbReference type="EC" id="3.1.3.11"/>
    </reaction>
</comment>
<comment type="cofactor">
    <cofactor evidence="1">
        <name>Mg(2+)</name>
        <dbReference type="ChEBI" id="CHEBI:18420"/>
    </cofactor>
    <text evidence="1">Binds 2 magnesium ions per subunit.</text>
</comment>
<comment type="pathway">
    <text evidence="1">Carbohydrate biosynthesis; gluconeogenesis.</text>
</comment>
<comment type="subunit">
    <text evidence="1">Homotetramer.</text>
</comment>
<comment type="subcellular location">
    <subcellularLocation>
        <location evidence="1">Cytoplasm</location>
    </subcellularLocation>
</comment>
<comment type="similarity">
    <text evidence="1">Belongs to the FBPase class 1 family.</text>
</comment>
<organism>
    <name type="scientific">Pseudomonas putida (strain ATCC 700007 / DSM 6899 / JCM 31910 / BCRC 17059 / LMG 24140 / F1)</name>
    <dbReference type="NCBI Taxonomy" id="351746"/>
    <lineage>
        <taxon>Bacteria</taxon>
        <taxon>Pseudomonadati</taxon>
        <taxon>Pseudomonadota</taxon>
        <taxon>Gammaproteobacteria</taxon>
        <taxon>Pseudomonadales</taxon>
        <taxon>Pseudomonadaceae</taxon>
        <taxon>Pseudomonas</taxon>
    </lineage>
</organism>
<accession>A5WA74</accession>
<reference key="1">
    <citation type="submission" date="2007-05" db="EMBL/GenBank/DDBJ databases">
        <title>Complete sequence of Pseudomonas putida F1.</title>
        <authorList>
            <consortium name="US DOE Joint Genome Institute"/>
            <person name="Copeland A."/>
            <person name="Lucas S."/>
            <person name="Lapidus A."/>
            <person name="Barry K."/>
            <person name="Detter J.C."/>
            <person name="Glavina del Rio T."/>
            <person name="Hammon N."/>
            <person name="Israni S."/>
            <person name="Dalin E."/>
            <person name="Tice H."/>
            <person name="Pitluck S."/>
            <person name="Chain P."/>
            <person name="Malfatti S."/>
            <person name="Shin M."/>
            <person name="Vergez L."/>
            <person name="Schmutz J."/>
            <person name="Larimer F."/>
            <person name="Land M."/>
            <person name="Hauser L."/>
            <person name="Kyrpides N."/>
            <person name="Lykidis A."/>
            <person name="Parales R."/>
            <person name="Richardson P."/>
        </authorList>
    </citation>
    <scope>NUCLEOTIDE SEQUENCE [LARGE SCALE GENOMIC DNA]</scope>
    <source>
        <strain>ATCC 700007 / DSM 6899 / JCM 31910 / BCRC 17059 / LMG 24140 / F1</strain>
    </source>
</reference>